<proteinExistence type="inferred from homology"/>
<organism>
    <name type="scientific">Shewanella sp. (strain MR-7)</name>
    <dbReference type="NCBI Taxonomy" id="60481"/>
    <lineage>
        <taxon>Bacteria</taxon>
        <taxon>Pseudomonadati</taxon>
        <taxon>Pseudomonadota</taxon>
        <taxon>Gammaproteobacteria</taxon>
        <taxon>Alteromonadales</taxon>
        <taxon>Shewanellaceae</taxon>
        <taxon>Shewanella</taxon>
    </lineage>
</organism>
<protein>
    <recommendedName>
        <fullName evidence="1">Small ribosomal subunit protein uS11</fullName>
    </recommendedName>
    <alternativeName>
        <fullName evidence="2">30S ribosomal protein S11</fullName>
    </alternativeName>
</protein>
<gene>
    <name evidence="1" type="primary">rpsK</name>
    <name type="ordered locus">Shewmr7_0217</name>
</gene>
<evidence type="ECO:0000255" key="1">
    <source>
        <dbReference type="HAMAP-Rule" id="MF_01310"/>
    </source>
</evidence>
<evidence type="ECO:0000305" key="2"/>
<name>RS11_SHESR</name>
<keyword id="KW-0687">Ribonucleoprotein</keyword>
<keyword id="KW-0689">Ribosomal protein</keyword>
<keyword id="KW-0694">RNA-binding</keyword>
<keyword id="KW-0699">rRNA-binding</keyword>
<sequence>MAKVPSRSPRKRVRKQVADGMAHIHASFNNTIVTITDRQGNALSWATSGGSGFRGSRKSTPFAAQVAAERAGAAAQDYGLKNLEVFVKGPGPGRESAIRALNAVGYKITNITDVTPIPHNGCRPPKKRRV</sequence>
<dbReference type="EMBL" id="CP000444">
    <property type="protein sequence ID" value="ABI41223.1"/>
    <property type="molecule type" value="Genomic_DNA"/>
</dbReference>
<dbReference type="SMR" id="Q0I082"/>
<dbReference type="KEGG" id="shm:Shewmr7_0217"/>
<dbReference type="HOGENOM" id="CLU_072439_5_0_6"/>
<dbReference type="GO" id="GO:1990904">
    <property type="term" value="C:ribonucleoprotein complex"/>
    <property type="evidence" value="ECO:0007669"/>
    <property type="project" value="UniProtKB-KW"/>
</dbReference>
<dbReference type="GO" id="GO:0005840">
    <property type="term" value="C:ribosome"/>
    <property type="evidence" value="ECO:0007669"/>
    <property type="project" value="UniProtKB-KW"/>
</dbReference>
<dbReference type="GO" id="GO:0019843">
    <property type="term" value="F:rRNA binding"/>
    <property type="evidence" value="ECO:0007669"/>
    <property type="project" value="UniProtKB-UniRule"/>
</dbReference>
<dbReference type="GO" id="GO:0003735">
    <property type="term" value="F:structural constituent of ribosome"/>
    <property type="evidence" value="ECO:0007669"/>
    <property type="project" value="InterPro"/>
</dbReference>
<dbReference type="GO" id="GO:0006412">
    <property type="term" value="P:translation"/>
    <property type="evidence" value="ECO:0007669"/>
    <property type="project" value="UniProtKB-UniRule"/>
</dbReference>
<dbReference type="FunFam" id="3.30.420.80:FF:000001">
    <property type="entry name" value="30S ribosomal protein S11"/>
    <property type="match status" value="1"/>
</dbReference>
<dbReference type="Gene3D" id="3.30.420.80">
    <property type="entry name" value="Ribosomal protein S11"/>
    <property type="match status" value="1"/>
</dbReference>
<dbReference type="HAMAP" id="MF_01310">
    <property type="entry name" value="Ribosomal_uS11"/>
    <property type="match status" value="1"/>
</dbReference>
<dbReference type="InterPro" id="IPR001971">
    <property type="entry name" value="Ribosomal_uS11"/>
</dbReference>
<dbReference type="InterPro" id="IPR019981">
    <property type="entry name" value="Ribosomal_uS11_bac-type"/>
</dbReference>
<dbReference type="InterPro" id="IPR018102">
    <property type="entry name" value="Ribosomal_uS11_CS"/>
</dbReference>
<dbReference type="InterPro" id="IPR036967">
    <property type="entry name" value="Ribosomal_uS11_sf"/>
</dbReference>
<dbReference type="NCBIfam" id="NF003698">
    <property type="entry name" value="PRK05309.1"/>
    <property type="match status" value="1"/>
</dbReference>
<dbReference type="NCBIfam" id="TIGR03632">
    <property type="entry name" value="uS11_bact"/>
    <property type="match status" value="1"/>
</dbReference>
<dbReference type="PANTHER" id="PTHR11759">
    <property type="entry name" value="40S RIBOSOMAL PROTEIN S14/30S RIBOSOMAL PROTEIN S11"/>
    <property type="match status" value="1"/>
</dbReference>
<dbReference type="Pfam" id="PF00411">
    <property type="entry name" value="Ribosomal_S11"/>
    <property type="match status" value="1"/>
</dbReference>
<dbReference type="PIRSF" id="PIRSF002131">
    <property type="entry name" value="Ribosomal_S11"/>
    <property type="match status" value="1"/>
</dbReference>
<dbReference type="SUPFAM" id="SSF53137">
    <property type="entry name" value="Translational machinery components"/>
    <property type="match status" value="1"/>
</dbReference>
<dbReference type="PROSITE" id="PS00054">
    <property type="entry name" value="RIBOSOMAL_S11"/>
    <property type="match status" value="1"/>
</dbReference>
<comment type="function">
    <text evidence="1">Located on the platform of the 30S subunit, it bridges several disparate RNA helices of the 16S rRNA. Forms part of the Shine-Dalgarno cleft in the 70S ribosome.</text>
</comment>
<comment type="subunit">
    <text evidence="1">Part of the 30S ribosomal subunit. Interacts with proteins S7 and S18. Binds to IF-3.</text>
</comment>
<comment type="similarity">
    <text evidence="1">Belongs to the universal ribosomal protein uS11 family.</text>
</comment>
<feature type="chain" id="PRO_0000294854" description="Small ribosomal subunit protein uS11">
    <location>
        <begin position="1"/>
        <end position="130"/>
    </location>
</feature>
<accession>Q0I082</accession>
<reference key="1">
    <citation type="submission" date="2006-08" db="EMBL/GenBank/DDBJ databases">
        <title>Complete sequence of chromosome 1 of Shewanella sp. MR-7.</title>
        <authorList>
            <person name="Copeland A."/>
            <person name="Lucas S."/>
            <person name="Lapidus A."/>
            <person name="Barry K."/>
            <person name="Detter J.C."/>
            <person name="Glavina del Rio T."/>
            <person name="Hammon N."/>
            <person name="Israni S."/>
            <person name="Dalin E."/>
            <person name="Tice H."/>
            <person name="Pitluck S."/>
            <person name="Kiss H."/>
            <person name="Brettin T."/>
            <person name="Bruce D."/>
            <person name="Han C."/>
            <person name="Tapia R."/>
            <person name="Gilna P."/>
            <person name="Schmutz J."/>
            <person name="Larimer F."/>
            <person name="Land M."/>
            <person name="Hauser L."/>
            <person name="Kyrpides N."/>
            <person name="Mikhailova N."/>
            <person name="Nealson K."/>
            <person name="Konstantinidis K."/>
            <person name="Klappenbach J."/>
            <person name="Tiedje J."/>
            <person name="Richardson P."/>
        </authorList>
    </citation>
    <scope>NUCLEOTIDE SEQUENCE [LARGE SCALE GENOMIC DNA]</scope>
    <source>
        <strain>MR-7</strain>
    </source>
</reference>